<keyword id="KW-0997">Cell inner membrane</keyword>
<keyword id="KW-1003">Cell membrane</keyword>
<keyword id="KW-0472">Membrane</keyword>
<keyword id="KW-1185">Reference proteome</keyword>
<keyword id="KW-0812">Transmembrane</keyword>
<keyword id="KW-1133">Transmembrane helix</keyword>
<sequence length="131" mass="15015">MTTKRKPYVRPMTSTWWKKLPFYRFYMLREGTAVPAVWFSIELIFGLFALKNGPEAWAGFVDFLQNPVIVIINLITLAAALLHTKTWFELAPKAANIIVKDEKMGPEPIIKSLWAVTVVATIVILFVALYW</sequence>
<accession>P0A8Q1</accession>
<accession>P03805</accession>
<feature type="chain" id="PRO_0000196527" description="Fumarate reductase subunit C">
    <location>
        <begin position="1"/>
        <end position="131"/>
    </location>
</feature>
<feature type="transmembrane region" description="Helical" evidence="1">
    <location>
        <begin position="30"/>
        <end position="50"/>
    </location>
</feature>
<feature type="transmembrane region" description="Helical" evidence="1">
    <location>
        <begin position="63"/>
        <end position="83"/>
    </location>
</feature>
<feature type="transmembrane region" description="Helical" evidence="1">
    <location>
        <begin position="109"/>
        <end position="129"/>
    </location>
</feature>
<protein>
    <recommendedName>
        <fullName evidence="1">Fumarate reductase subunit C</fullName>
    </recommendedName>
    <alternativeName>
        <fullName evidence="1">Fumarate reductase 15 kDa hydrophobic protein</fullName>
    </alternativeName>
    <alternativeName>
        <fullName evidence="1">Quinol-fumarate reductase subunit C</fullName>
        <shortName evidence="1">QFR subunit C</shortName>
    </alternativeName>
</protein>
<proteinExistence type="inferred from homology"/>
<evidence type="ECO:0000255" key="1">
    <source>
        <dbReference type="HAMAP-Rule" id="MF_00708"/>
    </source>
</evidence>
<name>FRDC_ECOL6</name>
<comment type="function">
    <text evidence="1">Two distinct, membrane-bound, FAD-containing enzymes are responsible for the catalysis of fumarate and succinate interconversion; fumarate reductase is used in anaerobic growth, and succinate dehydrogenase is used in aerobic growth. Anchors the catalytic components of the fumarate reductase complex to the cell inner membrane, binds quinones.</text>
</comment>
<comment type="subunit">
    <text evidence="1">Part of an enzyme complex containing four subunits: a flavoprotein (FrdA), an iron-sulfur protein (FrdB), and two hydrophobic anchor proteins (FrdC and FrdD).</text>
</comment>
<comment type="subcellular location">
    <subcellularLocation>
        <location evidence="1">Cell inner membrane</location>
        <topology evidence="1">Multi-pass membrane protein</topology>
    </subcellularLocation>
</comment>
<comment type="similarity">
    <text evidence="1">Belongs to the FrdC family.</text>
</comment>
<reference key="1">
    <citation type="journal article" date="2002" name="Proc. Natl. Acad. Sci. U.S.A.">
        <title>Extensive mosaic structure revealed by the complete genome sequence of uropathogenic Escherichia coli.</title>
        <authorList>
            <person name="Welch R.A."/>
            <person name="Burland V."/>
            <person name="Plunkett G. III"/>
            <person name="Redford P."/>
            <person name="Roesch P."/>
            <person name="Rasko D."/>
            <person name="Buckles E.L."/>
            <person name="Liou S.-R."/>
            <person name="Boutin A."/>
            <person name="Hackett J."/>
            <person name="Stroud D."/>
            <person name="Mayhew G.F."/>
            <person name="Rose D.J."/>
            <person name="Zhou S."/>
            <person name="Schwartz D.C."/>
            <person name="Perna N.T."/>
            <person name="Mobley H.L.T."/>
            <person name="Donnenberg M.S."/>
            <person name="Blattner F.R."/>
        </authorList>
    </citation>
    <scope>NUCLEOTIDE SEQUENCE [LARGE SCALE GENOMIC DNA]</scope>
    <source>
        <strain>CFT073 / ATCC 700928 / UPEC</strain>
    </source>
</reference>
<dbReference type="EMBL" id="AE014075">
    <property type="protein sequence ID" value="AAN83662.1"/>
    <property type="molecule type" value="Genomic_DNA"/>
</dbReference>
<dbReference type="RefSeq" id="WP_000208757.1">
    <property type="nucleotide sequence ID" value="NZ_CP051263.1"/>
</dbReference>
<dbReference type="SMR" id="P0A8Q1"/>
<dbReference type="STRING" id="199310.c5240"/>
<dbReference type="GeneID" id="93777670"/>
<dbReference type="KEGG" id="ecc:c5240"/>
<dbReference type="eggNOG" id="COG3029">
    <property type="taxonomic scope" value="Bacteria"/>
</dbReference>
<dbReference type="HOGENOM" id="CLU_156492_0_0_6"/>
<dbReference type="BioCyc" id="ECOL199310:C5240-MONOMER"/>
<dbReference type="Proteomes" id="UP000001410">
    <property type="component" value="Chromosome"/>
</dbReference>
<dbReference type="GO" id="GO:0045283">
    <property type="term" value="C:fumarate reductase complex"/>
    <property type="evidence" value="ECO:0007669"/>
    <property type="project" value="UniProtKB-UniRule"/>
</dbReference>
<dbReference type="GO" id="GO:0005886">
    <property type="term" value="C:plasma membrane"/>
    <property type="evidence" value="ECO:0007669"/>
    <property type="project" value="UniProtKB-SubCell"/>
</dbReference>
<dbReference type="GO" id="GO:0000104">
    <property type="term" value="F:succinate dehydrogenase activity"/>
    <property type="evidence" value="ECO:0007669"/>
    <property type="project" value="UniProtKB-UniRule"/>
</dbReference>
<dbReference type="CDD" id="cd00546">
    <property type="entry name" value="QFR_TypeD_subunitC"/>
    <property type="match status" value="1"/>
</dbReference>
<dbReference type="FunFam" id="1.20.1300.10:FF:000003">
    <property type="entry name" value="Fumarate reductase subunit C"/>
    <property type="match status" value="1"/>
</dbReference>
<dbReference type="Gene3D" id="1.20.1300.10">
    <property type="entry name" value="Fumarate reductase/succinate dehydrogenase, transmembrane subunit"/>
    <property type="match status" value="1"/>
</dbReference>
<dbReference type="HAMAP" id="MF_00708">
    <property type="entry name" value="Fumarate_red_C"/>
    <property type="match status" value="1"/>
</dbReference>
<dbReference type="InterPro" id="IPR003510">
    <property type="entry name" value="Fumarate_red_C"/>
</dbReference>
<dbReference type="InterPro" id="IPR034804">
    <property type="entry name" value="SQR/QFR_C/D"/>
</dbReference>
<dbReference type="NCBIfam" id="NF003445">
    <property type="entry name" value="PRK04987.1"/>
    <property type="match status" value="1"/>
</dbReference>
<dbReference type="Pfam" id="PF02300">
    <property type="entry name" value="Fumarate_red_C"/>
    <property type="match status" value="1"/>
</dbReference>
<dbReference type="PIRSF" id="PIRSF000180">
    <property type="entry name" value="FrdC"/>
    <property type="match status" value="1"/>
</dbReference>
<dbReference type="SUPFAM" id="SSF81343">
    <property type="entry name" value="Fumarate reductase respiratory complex transmembrane subunits"/>
    <property type="match status" value="1"/>
</dbReference>
<gene>
    <name evidence="1" type="primary">frdC</name>
    <name type="ordered locus">c5240</name>
</gene>
<organism>
    <name type="scientific">Escherichia coli O6:H1 (strain CFT073 / ATCC 700928 / UPEC)</name>
    <dbReference type="NCBI Taxonomy" id="199310"/>
    <lineage>
        <taxon>Bacteria</taxon>
        <taxon>Pseudomonadati</taxon>
        <taxon>Pseudomonadota</taxon>
        <taxon>Gammaproteobacteria</taxon>
        <taxon>Enterobacterales</taxon>
        <taxon>Enterobacteriaceae</taxon>
        <taxon>Escherichia</taxon>
    </lineage>
</organism>